<feature type="chain" id="PRO_0000121524" description="Triokinase/FMN cyclase">
    <location>
        <begin position="1"/>
        <end position="578"/>
    </location>
</feature>
<feature type="domain" description="DhaK" evidence="6">
    <location>
        <begin position="9"/>
        <end position="336"/>
    </location>
</feature>
<feature type="domain" description="DhaL" evidence="5">
    <location>
        <begin position="372"/>
        <end position="571"/>
    </location>
</feature>
<feature type="active site" description="Tele-hemiaminal-histidine intermediate" evidence="6">
    <location>
        <position position="221"/>
    </location>
</feature>
<feature type="binding site" evidence="1">
    <location>
        <begin position="56"/>
        <end position="59"/>
    </location>
    <ligand>
        <name>dihydroxyacetone</name>
        <dbReference type="ChEBI" id="CHEBI:16016"/>
    </ligand>
</feature>
<feature type="binding site" evidence="6">
    <location>
        <position position="109"/>
    </location>
    <ligand>
        <name>dihydroxyacetone</name>
        <dbReference type="ChEBI" id="CHEBI:16016"/>
    </ligand>
</feature>
<feature type="binding site" evidence="6">
    <location>
        <position position="114"/>
    </location>
    <ligand>
        <name>dihydroxyacetone</name>
        <dbReference type="ChEBI" id="CHEBI:16016"/>
    </ligand>
</feature>
<feature type="binding site" evidence="1">
    <location>
        <begin position="401"/>
        <end position="404"/>
    </location>
    <ligand>
        <name>ATP</name>
        <dbReference type="ChEBI" id="CHEBI:30616"/>
    </ligand>
</feature>
<feature type="binding site" evidence="1">
    <location>
        <begin position="446"/>
        <end position="447"/>
    </location>
    <ligand>
        <name>ATP</name>
        <dbReference type="ChEBI" id="CHEBI:30616"/>
    </ligand>
</feature>
<feature type="binding site" evidence="1">
    <location>
        <position position="486"/>
    </location>
    <ligand>
        <name>ATP</name>
        <dbReference type="ChEBI" id="CHEBI:30616"/>
    </ligand>
</feature>
<feature type="binding site" evidence="1">
    <location>
        <begin position="494"/>
        <end position="495"/>
    </location>
    <ligand>
        <name>ATP</name>
        <dbReference type="ChEBI" id="CHEBI:30616"/>
    </ligand>
</feature>
<feature type="binding site" evidence="1">
    <location>
        <begin position="556"/>
        <end position="558"/>
    </location>
    <ligand>
        <name>ATP</name>
        <dbReference type="ChEBI" id="CHEBI:30616"/>
    </ligand>
</feature>
<feature type="modified residue" description="Phosphoserine" evidence="3">
    <location>
        <position position="350"/>
    </location>
</feature>
<feature type="modified residue" description="Phosphoserine" evidence="3">
    <location>
        <position position="511"/>
    </location>
</feature>
<feature type="modified residue" description="Phosphoserine" evidence="4">
    <location>
        <position position="545"/>
    </location>
</feature>
<comment type="function">
    <text evidence="2 3 4">Catalyzes both the phosphorylation of dihydroxyacetone and of glyceraldehyde, and the splitting of ribonucleoside diphosphate-X compounds among which FAD is the best substrate. Represses IFIH1-mediated cellular antiviral response.</text>
</comment>
<comment type="catalytic activity">
    <reaction>
        <text>dihydroxyacetone + ATP = dihydroxyacetone phosphate + ADP + H(+)</text>
        <dbReference type="Rhea" id="RHEA:15773"/>
        <dbReference type="ChEBI" id="CHEBI:15378"/>
        <dbReference type="ChEBI" id="CHEBI:16016"/>
        <dbReference type="ChEBI" id="CHEBI:30616"/>
        <dbReference type="ChEBI" id="CHEBI:57642"/>
        <dbReference type="ChEBI" id="CHEBI:456216"/>
        <dbReference type="EC" id="2.7.1.29"/>
    </reaction>
</comment>
<comment type="catalytic activity">
    <reaction>
        <text>D-glyceraldehyde + ATP = D-glyceraldehyde 3-phosphate + ADP + H(+)</text>
        <dbReference type="Rhea" id="RHEA:13941"/>
        <dbReference type="ChEBI" id="CHEBI:15378"/>
        <dbReference type="ChEBI" id="CHEBI:17378"/>
        <dbReference type="ChEBI" id="CHEBI:30616"/>
        <dbReference type="ChEBI" id="CHEBI:59776"/>
        <dbReference type="ChEBI" id="CHEBI:456216"/>
        <dbReference type="EC" id="2.7.1.28"/>
    </reaction>
</comment>
<comment type="catalytic activity">
    <reaction>
        <text>FAD = riboflavin cyclic-4',5'-phosphate + AMP + H(+)</text>
        <dbReference type="Rhea" id="RHEA:13729"/>
        <dbReference type="ChEBI" id="CHEBI:15378"/>
        <dbReference type="ChEBI" id="CHEBI:57692"/>
        <dbReference type="ChEBI" id="CHEBI:76202"/>
        <dbReference type="ChEBI" id="CHEBI:456215"/>
        <dbReference type="EC" id="4.6.1.15"/>
    </reaction>
</comment>
<comment type="cofactor">
    <cofactor evidence="1">
        <name>Mg(2+)</name>
        <dbReference type="ChEBI" id="CHEBI:18420"/>
    </cofactor>
</comment>
<comment type="cofactor">
    <cofactor evidence="1">
        <name>Mn(2+)</name>
        <dbReference type="ChEBI" id="CHEBI:29035"/>
    </cofactor>
    <cofactor evidence="1">
        <name>Co(2+)</name>
        <dbReference type="ChEBI" id="CHEBI:48828"/>
    </cofactor>
    <text evidence="1">Manganese or cobalt are requested for FAD-AMP lyase activity.</text>
</comment>
<comment type="activity regulation">
    <text evidence="1">Each activity is inhibited by the substrate(s) of the other.</text>
</comment>
<comment type="subunit">
    <text evidence="2 3">Homodimer (By similarity). Interacts with IFIH1 (via the CARD domains), the interaction is inhibited by viral infection (By similarity).</text>
</comment>
<comment type="domain">
    <text evidence="3">DhaK and DhaL domains have differential roles, individually DhaK is inactive and DhaL displays cyclase but not kinase activity.</text>
</comment>
<sequence length="578" mass="59124">MTSKKLVNSVAGCADDALAGLVACNPSLQLLQGHRVALRSDLDSLKGRVALLSGGGSGHEPAHAGFIGKGMLTGVIAGAVFTSPAVGSILAAIRAVAQAGTVGTLLIVKNYTGDRLNFGLAREQARAEGIPVEMVVVGDDSAFTVLKKAGRRGLCGTVLIHKVAGALAEAGVGLEEITDRVSVVAKAMGTLGVSLSSCSVPGSKPTFELSADEVELGLGIHGEAGVRRIKMATANEIVALMLDHMTSSSNASHVPVPPGSSVVLMVNNLGGLSFLELGIIADAAVCSLEGHGVKIARALVGTFMSALEMPGVSLTLLLVDEPLLKLIDAETTASAWPNVAKVWVTGRKRSRAAPTEPLAAPDSTTAAGEASKQMVLVLEWVCTTLLGLEEHLNALDRAAGDGDCGTTHSRAARAIXGWLKEGPPPASPAQLLSKLSFLLLEKMGGSSGALYGLFLTAAAQPLKAKTDLPAWSAAMDAGLEAMQKYGKAAPGDRTMLDSLWAAGQELQAWKSPGANMLQILTKAVKSAEAAAEATKNMEAGAGRASYISSARLDQPDPGAVAAAAILRAILEVLQSQGA</sequence>
<reference key="1">
    <citation type="journal article" date="2005" name="BMC Genomics">
        <title>Characterization of 954 bovine full-CDS cDNA sequences.</title>
        <authorList>
            <person name="Harhay G.P."/>
            <person name="Sonstegard T.S."/>
            <person name="Keele J.W."/>
            <person name="Heaton M.P."/>
            <person name="Clawson M.L."/>
            <person name="Snelling W.M."/>
            <person name="Wiedmann R.T."/>
            <person name="Van Tassell C.P."/>
            <person name="Smith T.P.L."/>
        </authorList>
    </citation>
    <scope>NUCLEOTIDE SEQUENCE [LARGE SCALE MRNA]</scope>
</reference>
<proteinExistence type="evidence at transcript level"/>
<gene>
    <name type="primary">TKFC</name>
    <name type="synonym">DAK</name>
</gene>
<dbReference type="EC" id="2.7.1.28"/>
<dbReference type="EC" id="2.7.1.29"/>
<dbReference type="EC" id="4.6.1.15"/>
<dbReference type="EMBL" id="BT021593">
    <property type="protein sequence ID" value="AAX46440.1"/>
    <property type="molecule type" value="mRNA"/>
</dbReference>
<dbReference type="FunCoup" id="Q58DK4">
    <property type="interactions" value="1730"/>
</dbReference>
<dbReference type="STRING" id="9913.ENSBTAP00000069894"/>
<dbReference type="PaxDb" id="9913-ENSBTAP00000024227"/>
<dbReference type="PeptideAtlas" id="Q58DK4"/>
<dbReference type="eggNOG" id="KOG2426">
    <property type="taxonomic scope" value="Eukaryota"/>
</dbReference>
<dbReference type="InParanoid" id="Q58DK4"/>
<dbReference type="OrthoDB" id="1724672at2759"/>
<dbReference type="Proteomes" id="UP000009136">
    <property type="component" value="Unplaced"/>
</dbReference>
<dbReference type="GO" id="GO:0005829">
    <property type="term" value="C:cytosol"/>
    <property type="evidence" value="ECO:0000318"/>
    <property type="project" value="GO_Central"/>
</dbReference>
<dbReference type="GO" id="GO:0005524">
    <property type="term" value="F:ATP binding"/>
    <property type="evidence" value="ECO:0007669"/>
    <property type="project" value="UniProtKB-KW"/>
</dbReference>
<dbReference type="GO" id="GO:0034012">
    <property type="term" value="F:FAD-AMP lyase (cyclizing) activity"/>
    <property type="evidence" value="ECO:0007669"/>
    <property type="project" value="UniProtKB-EC"/>
</dbReference>
<dbReference type="GO" id="GO:0004371">
    <property type="term" value="F:glycerone kinase activity"/>
    <property type="evidence" value="ECO:0000318"/>
    <property type="project" value="GO_Central"/>
</dbReference>
<dbReference type="GO" id="GO:0046872">
    <property type="term" value="F:metal ion binding"/>
    <property type="evidence" value="ECO:0007669"/>
    <property type="project" value="UniProtKB-KW"/>
</dbReference>
<dbReference type="GO" id="GO:0050354">
    <property type="term" value="F:triokinase activity"/>
    <property type="evidence" value="ECO:0007669"/>
    <property type="project" value="UniProtKB-EC"/>
</dbReference>
<dbReference type="GO" id="GO:0019563">
    <property type="term" value="P:glycerol catabolic process"/>
    <property type="evidence" value="ECO:0000318"/>
    <property type="project" value="GO_Central"/>
</dbReference>
<dbReference type="GO" id="GO:0039534">
    <property type="term" value="P:negative regulation of MDA-5 signaling pathway"/>
    <property type="evidence" value="ECO:0000250"/>
    <property type="project" value="UniProtKB"/>
</dbReference>
<dbReference type="FunFam" id="1.25.40.340:FF:000001">
    <property type="entry name" value="Dihydroxyacetone kinase 1"/>
    <property type="match status" value="1"/>
</dbReference>
<dbReference type="FunFam" id="3.40.50.10440:FF:000001">
    <property type="entry name" value="Dihydroxyacetone kinase, DhaK subunit"/>
    <property type="match status" value="1"/>
</dbReference>
<dbReference type="FunFam" id="3.30.1180.20:FF:000003">
    <property type="entry name" value="triokinase/FMN cyclase isoform X1"/>
    <property type="match status" value="1"/>
</dbReference>
<dbReference type="Gene3D" id="1.25.40.340">
    <property type="match status" value="1"/>
</dbReference>
<dbReference type="Gene3D" id="3.40.50.10440">
    <property type="entry name" value="Dihydroxyacetone kinase, domain 1"/>
    <property type="match status" value="1"/>
</dbReference>
<dbReference type="Gene3D" id="3.30.1180.20">
    <property type="entry name" value="Dihydroxyacetone kinase, domain 2"/>
    <property type="match status" value="1"/>
</dbReference>
<dbReference type="InterPro" id="IPR012734">
    <property type="entry name" value="DhaK_ATP"/>
</dbReference>
<dbReference type="InterPro" id="IPR004006">
    <property type="entry name" value="DhaK_dom"/>
</dbReference>
<dbReference type="InterPro" id="IPR004007">
    <property type="entry name" value="DhaL_dom"/>
</dbReference>
<dbReference type="InterPro" id="IPR036117">
    <property type="entry name" value="DhaL_dom_sf"/>
</dbReference>
<dbReference type="InterPro" id="IPR050861">
    <property type="entry name" value="Dihydroxyacetone_Kinase"/>
</dbReference>
<dbReference type="NCBIfam" id="TIGR02361">
    <property type="entry name" value="dak_ATP"/>
    <property type="match status" value="1"/>
</dbReference>
<dbReference type="NCBIfam" id="NF011049">
    <property type="entry name" value="PRK14479.1"/>
    <property type="match status" value="1"/>
</dbReference>
<dbReference type="PANTHER" id="PTHR28629">
    <property type="entry name" value="TRIOKINASE/FMN CYCLASE"/>
    <property type="match status" value="1"/>
</dbReference>
<dbReference type="PANTHER" id="PTHR28629:SF4">
    <property type="entry name" value="TRIOKINASE_FMN CYCLASE"/>
    <property type="match status" value="1"/>
</dbReference>
<dbReference type="Pfam" id="PF02733">
    <property type="entry name" value="Dak1"/>
    <property type="match status" value="1"/>
</dbReference>
<dbReference type="Pfam" id="PF02734">
    <property type="entry name" value="Dak2"/>
    <property type="match status" value="1"/>
</dbReference>
<dbReference type="SMART" id="SM01120">
    <property type="entry name" value="Dak2"/>
    <property type="match status" value="1"/>
</dbReference>
<dbReference type="SUPFAM" id="SSF82549">
    <property type="entry name" value="DAK1/DegV-like"/>
    <property type="match status" value="1"/>
</dbReference>
<dbReference type="SUPFAM" id="SSF101473">
    <property type="entry name" value="DhaL-like"/>
    <property type="match status" value="1"/>
</dbReference>
<dbReference type="PROSITE" id="PS51481">
    <property type="entry name" value="DHAK"/>
    <property type="match status" value="1"/>
</dbReference>
<dbReference type="PROSITE" id="PS51480">
    <property type="entry name" value="DHAL"/>
    <property type="match status" value="1"/>
</dbReference>
<name>TKFC_BOVIN</name>
<keyword id="KW-0067">ATP-binding</keyword>
<keyword id="KW-0170">Cobalt</keyword>
<keyword id="KW-0274">FAD</keyword>
<keyword id="KW-0285">Flavoprotein</keyword>
<keyword id="KW-0418">Kinase</keyword>
<keyword id="KW-0456">Lyase</keyword>
<keyword id="KW-0460">Magnesium</keyword>
<keyword id="KW-0464">Manganese</keyword>
<keyword id="KW-0479">Metal-binding</keyword>
<keyword id="KW-0511">Multifunctional enzyme</keyword>
<keyword id="KW-0547">Nucleotide-binding</keyword>
<keyword id="KW-0597">Phosphoprotein</keyword>
<keyword id="KW-1185">Reference proteome</keyword>
<keyword id="KW-0808">Transferase</keyword>
<evidence type="ECO:0000250" key="1"/>
<evidence type="ECO:0000250" key="2">
    <source>
        <dbReference type="UniProtKB" id="F1RKQ4"/>
    </source>
</evidence>
<evidence type="ECO:0000250" key="3">
    <source>
        <dbReference type="UniProtKB" id="Q3LXA3"/>
    </source>
</evidence>
<evidence type="ECO:0000250" key="4">
    <source>
        <dbReference type="UniProtKB" id="Q4KLZ6"/>
    </source>
</evidence>
<evidence type="ECO:0000255" key="5">
    <source>
        <dbReference type="PROSITE-ProRule" id="PRU00813"/>
    </source>
</evidence>
<evidence type="ECO:0000255" key="6">
    <source>
        <dbReference type="PROSITE-ProRule" id="PRU00814"/>
    </source>
</evidence>
<protein>
    <recommendedName>
        <fullName>Triokinase/FMN cyclase</fullName>
    </recommendedName>
    <alternativeName>
        <fullName>Bifunctional ATP-dependent dihydroxyacetone kinase/FAD-AMP lyase (cyclizing)</fullName>
    </alternativeName>
    <domain>
        <recommendedName>
            <fullName>ATP-dependent dihydroxyacetone kinase</fullName>
            <shortName>DHA kinase</shortName>
            <ecNumber>2.7.1.28</ecNumber>
            <ecNumber>2.7.1.29</ecNumber>
        </recommendedName>
        <alternativeName>
            <fullName>Glycerone kinase</fullName>
        </alternativeName>
        <alternativeName>
            <fullName>Triokinase</fullName>
        </alternativeName>
        <alternativeName>
            <fullName>Triose kinase</fullName>
        </alternativeName>
    </domain>
    <domain>
        <recommendedName>
            <fullName>FAD-AMP lyase (cyclizing)</fullName>
            <ecNumber>4.6.1.15</ecNumber>
        </recommendedName>
        <alternativeName>
            <fullName>FAD-AMP lyase (cyclic FMN forming)</fullName>
        </alternativeName>
        <alternativeName>
            <fullName>FMN cyclase</fullName>
        </alternativeName>
    </domain>
</protein>
<organism>
    <name type="scientific">Bos taurus</name>
    <name type="common">Bovine</name>
    <dbReference type="NCBI Taxonomy" id="9913"/>
    <lineage>
        <taxon>Eukaryota</taxon>
        <taxon>Metazoa</taxon>
        <taxon>Chordata</taxon>
        <taxon>Craniata</taxon>
        <taxon>Vertebrata</taxon>
        <taxon>Euteleostomi</taxon>
        <taxon>Mammalia</taxon>
        <taxon>Eutheria</taxon>
        <taxon>Laurasiatheria</taxon>
        <taxon>Artiodactyla</taxon>
        <taxon>Ruminantia</taxon>
        <taxon>Pecora</taxon>
        <taxon>Bovidae</taxon>
        <taxon>Bovinae</taxon>
        <taxon>Bos</taxon>
    </lineage>
</organism>
<accession>Q58DK4</accession>